<protein>
    <recommendedName>
        <fullName>Squalene epoxidase 3</fullName>
        <shortName>AtSQE3</shortName>
        <ecNumber evidence="3">1.14.14.17</ecNumber>
    </recommendedName>
</protein>
<feature type="chain" id="PRO_0000422765" description="Squalene epoxidase 3">
    <location>
        <begin position="1"/>
        <end position="525"/>
    </location>
</feature>
<feature type="transmembrane region" description="Helical" evidence="2">
    <location>
        <begin position="9"/>
        <end position="29"/>
    </location>
</feature>
<feature type="transmembrane region" description="Helical" evidence="2">
    <location>
        <begin position="452"/>
        <end position="472"/>
    </location>
</feature>
<feature type="transmembrane region" description="Helical" evidence="2">
    <location>
        <begin position="477"/>
        <end position="497"/>
    </location>
</feature>
<feature type="binding site" evidence="1">
    <location>
        <begin position="64"/>
        <end position="65"/>
    </location>
    <ligand>
        <name>FAD</name>
        <dbReference type="ChEBI" id="CHEBI:57692"/>
    </ligand>
</feature>
<feature type="binding site" evidence="1">
    <location>
        <begin position="84"/>
        <end position="85"/>
    </location>
    <ligand>
        <name>FAD</name>
        <dbReference type="ChEBI" id="CHEBI:57692"/>
    </ligand>
</feature>
<feature type="binding site" evidence="1">
    <location>
        <position position="92"/>
    </location>
    <ligand>
        <name>FAD</name>
        <dbReference type="ChEBI" id="CHEBI:57692"/>
    </ligand>
</feature>
<feature type="binding site" evidence="1">
    <location>
        <position position="163"/>
    </location>
    <ligand>
        <name>FAD</name>
        <dbReference type="ChEBI" id="CHEBI:57692"/>
    </ligand>
</feature>
<feature type="binding site" evidence="1">
    <location>
        <position position="179"/>
    </location>
    <ligand>
        <name>FAD</name>
        <dbReference type="ChEBI" id="CHEBI:57692"/>
    </ligand>
</feature>
<feature type="binding site" evidence="1">
    <location>
        <position position="341"/>
    </location>
    <ligand>
        <name>FAD</name>
        <dbReference type="ChEBI" id="CHEBI:57692"/>
    </ligand>
</feature>
<feature type="binding site" evidence="1">
    <location>
        <position position="354"/>
    </location>
    <ligand>
        <name>FAD</name>
        <dbReference type="ChEBI" id="CHEBI:57692"/>
    </ligand>
</feature>
<feature type="site" description="Important for enzyme activity" evidence="1">
    <location>
        <position position="126"/>
    </location>
</feature>
<dbReference type="EC" id="1.14.14.17" evidence="3"/>
<dbReference type="EMBL" id="AL035709">
    <property type="protein sequence ID" value="CAB38924.1"/>
    <property type="status" value="ALT_SEQ"/>
    <property type="molecule type" value="Genomic_DNA"/>
</dbReference>
<dbReference type="EMBL" id="AL161592">
    <property type="protein sequence ID" value="CAB80441.1"/>
    <property type="status" value="ALT_SEQ"/>
    <property type="molecule type" value="Genomic_DNA"/>
</dbReference>
<dbReference type="EMBL" id="CP002687">
    <property type="protein sequence ID" value="AEE86835.1"/>
    <property type="molecule type" value="Genomic_DNA"/>
</dbReference>
<dbReference type="EMBL" id="AY072019">
    <property type="protein sequence ID" value="AAL57712.1"/>
    <property type="molecule type" value="mRNA"/>
</dbReference>
<dbReference type="EMBL" id="BT001057">
    <property type="protein sequence ID" value="AAN46811.1"/>
    <property type="molecule type" value="mRNA"/>
</dbReference>
<dbReference type="EMBL" id="AK226847">
    <property type="protein sequence ID" value="BAE98940.1"/>
    <property type="molecule type" value="mRNA"/>
</dbReference>
<dbReference type="PIR" id="T06023">
    <property type="entry name" value="T06023"/>
</dbReference>
<dbReference type="RefSeq" id="NP_568033.1">
    <property type="nucleotide sequence ID" value="NM_119938.4"/>
</dbReference>
<dbReference type="SMR" id="Q8VYH2"/>
<dbReference type="FunCoup" id="Q8VYH2">
    <property type="interactions" value="571"/>
</dbReference>
<dbReference type="IntAct" id="Q8VYH2">
    <property type="interactions" value="1"/>
</dbReference>
<dbReference type="STRING" id="3702.Q8VYH2"/>
<dbReference type="GlyGen" id="Q8VYH2">
    <property type="glycosylation" value="1 site"/>
</dbReference>
<dbReference type="PaxDb" id="3702-AT4G37760.1"/>
<dbReference type="ProteomicsDB" id="220575"/>
<dbReference type="EnsemblPlants" id="AT4G37760.1">
    <property type="protein sequence ID" value="AT4G37760.1"/>
    <property type="gene ID" value="AT4G37760"/>
</dbReference>
<dbReference type="GeneID" id="829932"/>
<dbReference type="Gramene" id="AT4G37760.1">
    <property type="protein sequence ID" value="AT4G37760.1"/>
    <property type="gene ID" value="AT4G37760"/>
</dbReference>
<dbReference type="KEGG" id="ath:AT4G37760"/>
<dbReference type="Araport" id="AT4G37760"/>
<dbReference type="TAIR" id="AT4G37760">
    <property type="gene designation" value="SQE3"/>
</dbReference>
<dbReference type="eggNOG" id="KOG1298">
    <property type="taxonomic scope" value="Eukaryota"/>
</dbReference>
<dbReference type="HOGENOM" id="CLU_026390_1_0_1"/>
<dbReference type="InParanoid" id="Q8VYH2"/>
<dbReference type="OMA" id="SGEMAHH"/>
<dbReference type="PhylomeDB" id="Q8VYH2"/>
<dbReference type="BRENDA" id="1.14.14.17">
    <property type="organism ID" value="399"/>
</dbReference>
<dbReference type="UniPathway" id="UPA00767">
    <property type="reaction ID" value="UER00752"/>
</dbReference>
<dbReference type="PRO" id="PR:Q8VYH2"/>
<dbReference type="Proteomes" id="UP000006548">
    <property type="component" value="Chromosome 4"/>
</dbReference>
<dbReference type="ExpressionAtlas" id="Q8VYH2">
    <property type="expression patterns" value="baseline and differential"/>
</dbReference>
<dbReference type="GO" id="GO:0016020">
    <property type="term" value="C:membrane"/>
    <property type="evidence" value="ECO:0007669"/>
    <property type="project" value="UniProtKB-SubCell"/>
</dbReference>
<dbReference type="GO" id="GO:0050660">
    <property type="term" value="F:flavin adenine dinucleotide binding"/>
    <property type="evidence" value="ECO:0007669"/>
    <property type="project" value="InterPro"/>
</dbReference>
<dbReference type="GO" id="GO:0004506">
    <property type="term" value="F:squalene monooxygenase activity"/>
    <property type="evidence" value="ECO:0007669"/>
    <property type="project" value="UniProtKB-EC"/>
</dbReference>
<dbReference type="GO" id="GO:0009753">
    <property type="term" value="P:response to jasmonic acid"/>
    <property type="evidence" value="ECO:0000270"/>
    <property type="project" value="TAIR"/>
</dbReference>
<dbReference type="GO" id="GO:0009611">
    <property type="term" value="P:response to wounding"/>
    <property type="evidence" value="ECO:0000270"/>
    <property type="project" value="TAIR"/>
</dbReference>
<dbReference type="GO" id="GO:0016126">
    <property type="term" value="P:sterol biosynthetic process"/>
    <property type="evidence" value="ECO:0000304"/>
    <property type="project" value="TAIR"/>
</dbReference>
<dbReference type="FunFam" id="3.50.50.60:FF:000074">
    <property type="entry name" value="Squalene monooxygenase 2"/>
    <property type="match status" value="1"/>
</dbReference>
<dbReference type="Gene3D" id="3.50.50.60">
    <property type="entry name" value="FAD/NAD(P)-binding domain"/>
    <property type="match status" value="1"/>
</dbReference>
<dbReference type="InterPro" id="IPR036188">
    <property type="entry name" value="FAD/NAD-bd_sf"/>
</dbReference>
<dbReference type="InterPro" id="IPR013698">
    <property type="entry name" value="Squalene_epoxidase"/>
</dbReference>
<dbReference type="InterPro" id="IPR040125">
    <property type="entry name" value="Squalene_monox"/>
</dbReference>
<dbReference type="PANTHER" id="PTHR10835:SF9">
    <property type="entry name" value="SQUALENE EPOXIDASE 3"/>
    <property type="match status" value="1"/>
</dbReference>
<dbReference type="PANTHER" id="PTHR10835">
    <property type="entry name" value="SQUALENE MONOOXYGENASE"/>
    <property type="match status" value="1"/>
</dbReference>
<dbReference type="Pfam" id="PF13450">
    <property type="entry name" value="NAD_binding_8"/>
    <property type="match status" value="1"/>
</dbReference>
<dbReference type="Pfam" id="PF08491">
    <property type="entry name" value="SE"/>
    <property type="match status" value="1"/>
</dbReference>
<dbReference type="PRINTS" id="PR00420">
    <property type="entry name" value="RNGMNOXGNASE"/>
</dbReference>
<dbReference type="SUPFAM" id="SSF51905">
    <property type="entry name" value="FAD/NAD(P)-binding domain"/>
    <property type="match status" value="1"/>
</dbReference>
<comment type="function">
    <text evidence="3">Catalyzes the stereospecific oxidation of squalene to (S)-2,3-epoxysqualene, and is considered to be a rate-limiting enzyme in steroid biosynthesis. Can produce not only oxidosqualene, but also 2,3:22,23-dioxidosqualene.</text>
</comment>
<comment type="catalytic activity">
    <reaction evidence="3">
        <text>squalene + reduced [NADPH--hemoprotein reductase] + O2 = (S)-2,3-epoxysqualene + oxidized [NADPH--hemoprotein reductase] + H2O + H(+)</text>
        <dbReference type="Rhea" id="RHEA:25282"/>
        <dbReference type="Rhea" id="RHEA-COMP:11964"/>
        <dbReference type="Rhea" id="RHEA-COMP:11965"/>
        <dbReference type="ChEBI" id="CHEBI:15377"/>
        <dbReference type="ChEBI" id="CHEBI:15378"/>
        <dbReference type="ChEBI" id="CHEBI:15379"/>
        <dbReference type="ChEBI" id="CHEBI:15440"/>
        <dbReference type="ChEBI" id="CHEBI:15441"/>
        <dbReference type="ChEBI" id="CHEBI:57618"/>
        <dbReference type="ChEBI" id="CHEBI:58210"/>
        <dbReference type="EC" id="1.14.14.17"/>
    </reaction>
</comment>
<comment type="cofactor">
    <cofactor evidence="1">
        <name>FAD</name>
        <dbReference type="ChEBI" id="CHEBI:57692"/>
    </cofactor>
</comment>
<comment type="pathway">
    <text>Terpene metabolism; lanosterol biosynthesis; lanosterol from farnesyl diphosphate: step 2/3.</text>
</comment>
<comment type="subcellular location">
    <subcellularLocation>
        <location evidence="4">Membrane</location>
        <topology evidence="4">Multi-pass membrane protein</topology>
    </subcellularLocation>
</comment>
<comment type="tissue specificity">
    <text evidence="3">Expressed in seedlings, leaves, stems, inflorescences and siliques.</text>
</comment>
<comment type="similarity">
    <text evidence="4">Belongs to the squalene monooxygenase family.</text>
</comment>
<comment type="sequence caution" evidence="4">
    <conflict type="erroneous gene model prediction">
        <sequence resource="EMBL-CDS" id="CAB38924"/>
    </conflict>
</comment>
<comment type="sequence caution" evidence="4">
    <conflict type="erroneous gene model prediction">
        <sequence resource="EMBL-CDS" id="CAB80441"/>
    </conflict>
</comment>
<sequence>MAPTIFVDHCILTTTFVASLFAFLLLYVLRRRSKTIHGSVNVRNGTLTVKSGTDVDIIIVGAGVAGAALAHTLGKEGRRVHVIERDLTEPDRIVGELLQPGGYLKLIELGLEDCVKDIDAQRVLGYALFKDGKHTKLSYPLDQFDSDVAGRSFHNGRFVQRMREKASLLPNVRMEQGTVTSLVEENGIIKGVQYKTKDGQELKSFAPLTIVCDGCFSNLRRSLCKPKVEVPSNFVGLVLENCELPFPNHGHVVLGDPSPILFYPISSSEVRCLVDVPGSKLPSVASGEMAHHLKTMVAPQVPPQIRDAFISAVEKGNIRTMPNRSMPADPIHTPGALLLGDAFNMRHPLTGGGMTVALSDIVILRDLLNPLVDLTNKESLSKYIESFYTLRKPVASTINTLAGALYKVFLASPDDARSEMRRACFDYLSLGGVCSSGPVALLSGLNPRPMSLVLHFFAVAIFGVGRLLVPLPSVKRLWLGARLISSASGIIFPIIKAEGVRQMFFPRTIPAIYRAPPTPSSSSPQ</sequence>
<organism>
    <name type="scientific">Arabidopsis thaliana</name>
    <name type="common">Mouse-ear cress</name>
    <dbReference type="NCBI Taxonomy" id="3702"/>
    <lineage>
        <taxon>Eukaryota</taxon>
        <taxon>Viridiplantae</taxon>
        <taxon>Streptophyta</taxon>
        <taxon>Embryophyta</taxon>
        <taxon>Tracheophyta</taxon>
        <taxon>Spermatophyta</taxon>
        <taxon>Magnoliopsida</taxon>
        <taxon>eudicotyledons</taxon>
        <taxon>Gunneridae</taxon>
        <taxon>Pentapetalae</taxon>
        <taxon>rosids</taxon>
        <taxon>malvids</taxon>
        <taxon>Brassicales</taxon>
        <taxon>Brassicaceae</taxon>
        <taxon>Camelineae</taxon>
        <taxon>Arabidopsis</taxon>
    </lineage>
</organism>
<keyword id="KW-0274">FAD</keyword>
<keyword id="KW-0285">Flavoprotein</keyword>
<keyword id="KW-0472">Membrane</keyword>
<keyword id="KW-0560">Oxidoreductase</keyword>
<keyword id="KW-1185">Reference proteome</keyword>
<keyword id="KW-0812">Transmembrane</keyword>
<keyword id="KW-1133">Transmembrane helix</keyword>
<name>ERG16_ARATH</name>
<accession>Q8VYH2</accession>
<accession>Q9T064</accession>
<reference key="1">
    <citation type="journal article" date="1999" name="Nature">
        <title>Sequence and analysis of chromosome 4 of the plant Arabidopsis thaliana.</title>
        <authorList>
            <person name="Mayer K.F.X."/>
            <person name="Schueller C."/>
            <person name="Wambutt R."/>
            <person name="Murphy G."/>
            <person name="Volckaert G."/>
            <person name="Pohl T."/>
            <person name="Duesterhoeft A."/>
            <person name="Stiekema W."/>
            <person name="Entian K.-D."/>
            <person name="Terryn N."/>
            <person name="Harris B."/>
            <person name="Ansorge W."/>
            <person name="Brandt P."/>
            <person name="Grivell L.A."/>
            <person name="Rieger M."/>
            <person name="Weichselgartner M."/>
            <person name="de Simone V."/>
            <person name="Obermaier B."/>
            <person name="Mache R."/>
            <person name="Mueller M."/>
            <person name="Kreis M."/>
            <person name="Delseny M."/>
            <person name="Puigdomenech P."/>
            <person name="Watson M."/>
            <person name="Schmidtheini T."/>
            <person name="Reichert B."/>
            <person name="Portetelle D."/>
            <person name="Perez-Alonso M."/>
            <person name="Boutry M."/>
            <person name="Bancroft I."/>
            <person name="Vos P."/>
            <person name="Hoheisel J."/>
            <person name="Zimmermann W."/>
            <person name="Wedler H."/>
            <person name="Ridley P."/>
            <person name="Langham S.-A."/>
            <person name="McCullagh B."/>
            <person name="Bilham L."/>
            <person name="Robben J."/>
            <person name="van der Schueren J."/>
            <person name="Grymonprez B."/>
            <person name="Chuang Y.-J."/>
            <person name="Vandenbussche F."/>
            <person name="Braeken M."/>
            <person name="Weltjens I."/>
            <person name="Voet M."/>
            <person name="Bastiaens I."/>
            <person name="Aert R."/>
            <person name="Defoor E."/>
            <person name="Weitzenegger T."/>
            <person name="Bothe G."/>
            <person name="Ramsperger U."/>
            <person name="Hilbert H."/>
            <person name="Braun M."/>
            <person name="Holzer E."/>
            <person name="Brandt A."/>
            <person name="Peters S."/>
            <person name="van Staveren M."/>
            <person name="Dirkse W."/>
            <person name="Mooijman P."/>
            <person name="Klein Lankhorst R."/>
            <person name="Rose M."/>
            <person name="Hauf J."/>
            <person name="Koetter P."/>
            <person name="Berneiser S."/>
            <person name="Hempel S."/>
            <person name="Feldpausch M."/>
            <person name="Lamberth S."/>
            <person name="Van den Daele H."/>
            <person name="De Keyser A."/>
            <person name="Buysshaert C."/>
            <person name="Gielen J."/>
            <person name="Villarroel R."/>
            <person name="De Clercq R."/>
            <person name="van Montagu M."/>
            <person name="Rogers J."/>
            <person name="Cronin A."/>
            <person name="Quail M.A."/>
            <person name="Bray-Allen S."/>
            <person name="Clark L."/>
            <person name="Doggett J."/>
            <person name="Hall S."/>
            <person name="Kay M."/>
            <person name="Lennard N."/>
            <person name="McLay K."/>
            <person name="Mayes R."/>
            <person name="Pettett A."/>
            <person name="Rajandream M.A."/>
            <person name="Lyne M."/>
            <person name="Benes V."/>
            <person name="Rechmann S."/>
            <person name="Borkova D."/>
            <person name="Bloecker H."/>
            <person name="Scharfe M."/>
            <person name="Grimm M."/>
            <person name="Loehnert T.-H."/>
            <person name="Dose S."/>
            <person name="de Haan M."/>
            <person name="Maarse A.C."/>
            <person name="Schaefer M."/>
            <person name="Mueller-Auer S."/>
            <person name="Gabel C."/>
            <person name="Fuchs M."/>
            <person name="Fartmann B."/>
            <person name="Granderath K."/>
            <person name="Dauner D."/>
            <person name="Herzl A."/>
            <person name="Neumann S."/>
            <person name="Argiriou A."/>
            <person name="Vitale D."/>
            <person name="Liguori R."/>
            <person name="Piravandi E."/>
            <person name="Massenet O."/>
            <person name="Quigley F."/>
            <person name="Clabauld G."/>
            <person name="Muendlein A."/>
            <person name="Felber R."/>
            <person name="Schnabl S."/>
            <person name="Hiller R."/>
            <person name="Schmidt W."/>
            <person name="Lecharny A."/>
            <person name="Aubourg S."/>
            <person name="Chefdor F."/>
            <person name="Cooke R."/>
            <person name="Berger C."/>
            <person name="Monfort A."/>
            <person name="Casacuberta E."/>
            <person name="Gibbons T."/>
            <person name="Weber N."/>
            <person name="Vandenbol M."/>
            <person name="Bargues M."/>
            <person name="Terol J."/>
            <person name="Torres A."/>
            <person name="Perez-Perez A."/>
            <person name="Purnelle B."/>
            <person name="Bent E."/>
            <person name="Johnson S."/>
            <person name="Tacon D."/>
            <person name="Jesse T."/>
            <person name="Heijnen L."/>
            <person name="Schwarz S."/>
            <person name="Scholler P."/>
            <person name="Heber S."/>
            <person name="Francs P."/>
            <person name="Bielke C."/>
            <person name="Frishman D."/>
            <person name="Haase D."/>
            <person name="Lemcke K."/>
            <person name="Mewes H.-W."/>
            <person name="Stocker S."/>
            <person name="Zaccaria P."/>
            <person name="Bevan M."/>
            <person name="Wilson R.K."/>
            <person name="de la Bastide M."/>
            <person name="Habermann K."/>
            <person name="Parnell L."/>
            <person name="Dedhia N."/>
            <person name="Gnoj L."/>
            <person name="Schutz K."/>
            <person name="Huang E."/>
            <person name="Spiegel L."/>
            <person name="Sekhon M."/>
            <person name="Murray J."/>
            <person name="Sheet P."/>
            <person name="Cordes M."/>
            <person name="Abu-Threideh J."/>
            <person name="Stoneking T."/>
            <person name="Kalicki J."/>
            <person name="Graves T."/>
            <person name="Harmon G."/>
            <person name="Edwards J."/>
            <person name="Latreille P."/>
            <person name="Courtney L."/>
            <person name="Cloud J."/>
            <person name="Abbott A."/>
            <person name="Scott K."/>
            <person name="Johnson D."/>
            <person name="Minx P."/>
            <person name="Bentley D."/>
            <person name="Fulton B."/>
            <person name="Miller N."/>
            <person name="Greco T."/>
            <person name="Kemp K."/>
            <person name="Kramer J."/>
            <person name="Fulton L."/>
            <person name="Mardis E."/>
            <person name="Dante M."/>
            <person name="Pepin K."/>
            <person name="Hillier L.W."/>
            <person name="Nelson J."/>
            <person name="Spieth J."/>
            <person name="Ryan E."/>
            <person name="Andrews S."/>
            <person name="Geisel C."/>
            <person name="Layman D."/>
            <person name="Du H."/>
            <person name="Ali J."/>
            <person name="Berghoff A."/>
            <person name="Jones K."/>
            <person name="Drone K."/>
            <person name="Cotton M."/>
            <person name="Joshu C."/>
            <person name="Antonoiu B."/>
            <person name="Zidanic M."/>
            <person name="Strong C."/>
            <person name="Sun H."/>
            <person name="Lamar B."/>
            <person name="Yordan C."/>
            <person name="Ma P."/>
            <person name="Zhong J."/>
            <person name="Preston R."/>
            <person name="Vil D."/>
            <person name="Shekher M."/>
            <person name="Matero A."/>
            <person name="Shah R."/>
            <person name="Swaby I.K."/>
            <person name="O'Shaughnessy A."/>
            <person name="Rodriguez M."/>
            <person name="Hoffman J."/>
            <person name="Till S."/>
            <person name="Granat S."/>
            <person name="Shohdy N."/>
            <person name="Hasegawa A."/>
            <person name="Hameed A."/>
            <person name="Lodhi M."/>
            <person name="Johnson A."/>
            <person name="Chen E."/>
            <person name="Marra M.A."/>
            <person name="Martienssen R."/>
            <person name="McCombie W.R."/>
        </authorList>
    </citation>
    <scope>NUCLEOTIDE SEQUENCE [LARGE SCALE GENOMIC DNA]</scope>
    <source>
        <strain>cv. Columbia</strain>
    </source>
</reference>
<reference key="2">
    <citation type="journal article" date="2017" name="Plant J.">
        <title>Araport11: a complete reannotation of the Arabidopsis thaliana reference genome.</title>
        <authorList>
            <person name="Cheng C.Y."/>
            <person name="Krishnakumar V."/>
            <person name="Chan A.P."/>
            <person name="Thibaud-Nissen F."/>
            <person name="Schobel S."/>
            <person name="Town C.D."/>
        </authorList>
    </citation>
    <scope>GENOME REANNOTATION</scope>
    <source>
        <strain>cv. Columbia</strain>
    </source>
</reference>
<reference key="3">
    <citation type="journal article" date="2003" name="Science">
        <title>Empirical analysis of transcriptional activity in the Arabidopsis genome.</title>
        <authorList>
            <person name="Yamada K."/>
            <person name="Lim J."/>
            <person name="Dale J.M."/>
            <person name="Chen H."/>
            <person name="Shinn P."/>
            <person name="Palm C.J."/>
            <person name="Southwick A.M."/>
            <person name="Wu H.C."/>
            <person name="Kim C.J."/>
            <person name="Nguyen M."/>
            <person name="Pham P.K."/>
            <person name="Cheuk R.F."/>
            <person name="Karlin-Newmann G."/>
            <person name="Liu S.X."/>
            <person name="Lam B."/>
            <person name="Sakano H."/>
            <person name="Wu T."/>
            <person name="Yu G."/>
            <person name="Miranda M."/>
            <person name="Quach H.L."/>
            <person name="Tripp M."/>
            <person name="Chang C.H."/>
            <person name="Lee J.M."/>
            <person name="Toriumi M.J."/>
            <person name="Chan M.M."/>
            <person name="Tang C.C."/>
            <person name="Onodera C.S."/>
            <person name="Deng J.M."/>
            <person name="Akiyama K."/>
            <person name="Ansari Y."/>
            <person name="Arakawa T."/>
            <person name="Banh J."/>
            <person name="Banno F."/>
            <person name="Bowser L."/>
            <person name="Brooks S.Y."/>
            <person name="Carninci P."/>
            <person name="Chao Q."/>
            <person name="Choy N."/>
            <person name="Enju A."/>
            <person name="Goldsmith A.D."/>
            <person name="Gurjal M."/>
            <person name="Hansen N.F."/>
            <person name="Hayashizaki Y."/>
            <person name="Johnson-Hopson C."/>
            <person name="Hsuan V.W."/>
            <person name="Iida K."/>
            <person name="Karnes M."/>
            <person name="Khan S."/>
            <person name="Koesema E."/>
            <person name="Ishida J."/>
            <person name="Jiang P.X."/>
            <person name="Jones T."/>
            <person name="Kawai J."/>
            <person name="Kamiya A."/>
            <person name="Meyers C."/>
            <person name="Nakajima M."/>
            <person name="Narusaka M."/>
            <person name="Seki M."/>
            <person name="Sakurai T."/>
            <person name="Satou M."/>
            <person name="Tamse R."/>
            <person name="Vaysberg M."/>
            <person name="Wallender E.K."/>
            <person name="Wong C."/>
            <person name="Yamamura Y."/>
            <person name="Yuan S."/>
            <person name="Shinozaki K."/>
            <person name="Davis R.W."/>
            <person name="Theologis A."/>
            <person name="Ecker J.R."/>
        </authorList>
    </citation>
    <scope>NUCLEOTIDE SEQUENCE [LARGE SCALE MRNA]</scope>
    <source>
        <strain>cv. Columbia</strain>
    </source>
</reference>
<reference key="4">
    <citation type="submission" date="2006-07" db="EMBL/GenBank/DDBJ databases">
        <title>Large-scale analysis of RIKEN Arabidopsis full-length (RAFL) cDNAs.</title>
        <authorList>
            <person name="Totoki Y."/>
            <person name="Seki M."/>
            <person name="Ishida J."/>
            <person name="Nakajima M."/>
            <person name="Enju A."/>
            <person name="Kamiya A."/>
            <person name="Narusaka M."/>
            <person name="Shin-i T."/>
            <person name="Nakagawa M."/>
            <person name="Sakamoto N."/>
            <person name="Oishi K."/>
            <person name="Kohara Y."/>
            <person name="Kobayashi M."/>
            <person name="Toyoda A."/>
            <person name="Sakaki Y."/>
            <person name="Sakurai T."/>
            <person name="Iida K."/>
            <person name="Akiyama K."/>
            <person name="Satou M."/>
            <person name="Toyoda T."/>
            <person name="Konagaya A."/>
            <person name="Carninci P."/>
            <person name="Kawai J."/>
            <person name="Hayashizaki Y."/>
            <person name="Shinozaki K."/>
        </authorList>
    </citation>
    <scope>NUCLEOTIDE SEQUENCE [LARGE SCALE MRNA]</scope>
    <source>
        <strain>cv. Columbia</strain>
    </source>
</reference>
<reference key="5">
    <citation type="journal article" date="2007" name="J. Biol. Chem.">
        <title>Arabidopsis thaliana squalene epoxidase 1 is essential for root and seed development.</title>
        <authorList>
            <person name="Rasbery J.M."/>
            <person name="Shan H."/>
            <person name="LeClair R.J."/>
            <person name="Norman M."/>
            <person name="Matsuda S.P."/>
            <person name="Bartel B."/>
        </authorList>
    </citation>
    <scope>IDENTIFICATION</scope>
    <scope>FUNCTION</scope>
    <scope>CATALYTIC ACTIVITY</scope>
    <scope>TISSUE SPECIFICITY</scope>
    <scope>GENE FAMILY</scope>
    <scope>NOMENCLATURE</scope>
</reference>
<proteinExistence type="evidence at protein level"/>
<evidence type="ECO:0000250" key="1">
    <source>
        <dbReference type="UniProtKB" id="Q14534"/>
    </source>
</evidence>
<evidence type="ECO:0000255" key="2"/>
<evidence type="ECO:0000269" key="3">
    <source>
    </source>
</evidence>
<evidence type="ECO:0000305" key="4"/>
<gene>
    <name type="primary">SQE3</name>
    <name type="ordered locus">At4g37760</name>
    <name type="ORF">T28I19.4</name>
</gene>